<gene>
    <name evidence="1" type="primary">sec22b</name>
    <name evidence="6" type="synonym">sec22l1</name>
</gene>
<dbReference type="EMBL" id="BC061616">
    <property type="protein sequence ID" value="AAH61616.1"/>
    <property type="molecule type" value="mRNA"/>
</dbReference>
<dbReference type="RefSeq" id="NP_989156.1">
    <property type="nucleotide sequence ID" value="NM_203825.1"/>
</dbReference>
<dbReference type="SMR" id="Q6P7L4"/>
<dbReference type="FunCoup" id="Q6P7L4">
    <property type="interactions" value="3205"/>
</dbReference>
<dbReference type="STRING" id="8364.ENSXETP00000015566"/>
<dbReference type="PaxDb" id="8364-ENSXETP00000054708"/>
<dbReference type="DNASU" id="394761"/>
<dbReference type="GeneID" id="394761"/>
<dbReference type="KEGG" id="xtr:394761"/>
<dbReference type="AGR" id="Xenbase:XB-GENE-999421"/>
<dbReference type="CTD" id="9554"/>
<dbReference type="Xenbase" id="XB-GENE-999421">
    <property type="gene designation" value="sec22b"/>
</dbReference>
<dbReference type="eggNOG" id="KOG0862">
    <property type="taxonomic scope" value="Eukaryota"/>
</dbReference>
<dbReference type="HOGENOM" id="CLU_054453_4_1_1"/>
<dbReference type="InParanoid" id="Q6P7L4"/>
<dbReference type="OMA" id="FIYWRFF"/>
<dbReference type="OrthoDB" id="1719357at2759"/>
<dbReference type="Reactome" id="R-XTR-204005">
    <property type="pathway name" value="COPII-mediated vesicle transport"/>
</dbReference>
<dbReference type="Reactome" id="R-XTR-5694530">
    <property type="pathway name" value="Cargo concentration in the ER"/>
</dbReference>
<dbReference type="Reactome" id="R-XTR-6811434">
    <property type="pathway name" value="COPI-dependent Golgi-to-ER retrograde traffic"/>
</dbReference>
<dbReference type="Proteomes" id="UP000008143">
    <property type="component" value="Chromosome 4"/>
</dbReference>
<dbReference type="Bgee" id="ENSXETG00000025777">
    <property type="expression patterns" value="Expressed in neurula embryo and 12 other cell types or tissues"/>
</dbReference>
<dbReference type="GO" id="GO:0005789">
    <property type="term" value="C:endoplasmic reticulum membrane"/>
    <property type="evidence" value="ECO:0007669"/>
    <property type="project" value="UniProtKB-SubCell"/>
</dbReference>
<dbReference type="GO" id="GO:0033116">
    <property type="term" value="C:endoplasmic reticulum-Golgi intermediate compartment membrane"/>
    <property type="evidence" value="ECO:0007669"/>
    <property type="project" value="UniProtKB-SubCell"/>
</dbReference>
<dbReference type="GO" id="GO:0005794">
    <property type="term" value="C:Golgi apparatus"/>
    <property type="evidence" value="ECO:0007669"/>
    <property type="project" value="UniProtKB-SubCell"/>
</dbReference>
<dbReference type="GO" id="GO:0042470">
    <property type="term" value="C:melanosome"/>
    <property type="evidence" value="ECO:0007669"/>
    <property type="project" value="UniProtKB-SubCell"/>
</dbReference>
<dbReference type="GO" id="GO:0005484">
    <property type="term" value="F:SNAP receptor activity"/>
    <property type="evidence" value="ECO:0007669"/>
    <property type="project" value="InterPro"/>
</dbReference>
<dbReference type="GO" id="GO:0006888">
    <property type="term" value="P:endoplasmic reticulum to Golgi vesicle-mediated transport"/>
    <property type="evidence" value="ECO:0007669"/>
    <property type="project" value="InterPro"/>
</dbReference>
<dbReference type="GO" id="GO:0015031">
    <property type="term" value="P:protein transport"/>
    <property type="evidence" value="ECO:0007669"/>
    <property type="project" value="UniProtKB-KW"/>
</dbReference>
<dbReference type="GO" id="GO:0006890">
    <property type="term" value="P:retrograde vesicle-mediated transport, Golgi to endoplasmic reticulum"/>
    <property type="evidence" value="ECO:0007669"/>
    <property type="project" value="InterPro"/>
</dbReference>
<dbReference type="CDD" id="cd14824">
    <property type="entry name" value="Longin"/>
    <property type="match status" value="1"/>
</dbReference>
<dbReference type="CDD" id="cd15866">
    <property type="entry name" value="R-SNARE_SEC22"/>
    <property type="match status" value="1"/>
</dbReference>
<dbReference type="FunFam" id="1.20.5.110:FF:000019">
    <property type="entry name" value="Vesicle-trafficking protein SEC22b"/>
    <property type="match status" value="1"/>
</dbReference>
<dbReference type="FunFam" id="3.30.450.50:FF:000004">
    <property type="entry name" value="vesicle-trafficking protein SEC22b"/>
    <property type="match status" value="1"/>
</dbReference>
<dbReference type="Gene3D" id="1.20.5.110">
    <property type="match status" value="1"/>
</dbReference>
<dbReference type="Gene3D" id="3.30.450.50">
    <property type="entry name" value="Longin domain"/>
    <property type="match status" value="1"/>
</dbReference>
<dbReference type="InterPro" id="IPR011012">
    <property type="entry name" value="Longin-like_dom_sf"/>
</dbReference>
<dbReference type="InterPro" id="IPR010908">
    <property type="entry name" value="Longin_dom"/>
</dbReference>
<dbReference type="InterPro" id="IPR044565">
    <property type="entry name" value="Sec22"/>
</dbReference>
<dbReference type="InterPro" id="IPR042855">
    <property type="entry name" value="V_SNARE_CC"/>
</dbReference>
<dbReference type="PANTHER" id="PTHR45837">
    <property type="entry name" value="VESICLE-TRAFFICKING PROTEIN SEC22B"/>
    <property type="match status" value="1"/>
</dbReference>
<dbReference type="Pfam" id="PF13774">
    <property type="entry name" value="Longin"/>
    <property type="match status" value="1"/>
</dbReference>
<dbReference type="Pfam" id="PF00957">
    <property type="entry name" value="Synaptobrevin"/>
    <property type="match status" value="1"/>
</dbReference>
<dbReference type="SMART" id="SM01270">
    <property type="entry name" value="Longin"/>
    <property type="match status" value="1"/>
</dbReference>
<dbReference type="SUPFAM" id="SSF58038">
    <property type="entry name" value="SNARE fusion complex"/>
    <property type="match status" value="1"/>
</dbReference>
<dbReference type="SUPFAM" id="SSF64356">
    <property type="entry name" value="SNARE-like"/>
    <property type="match status" value="1"/>
</dbReference>
<dbReference type="PROSITE" id="PS50859">
    <property type="entry name" value="LONGIN"/>
    <property type="match status" value="1"/>
</dbReference>
<dbReference type="PROSITE" id="PS50892">
    <property type="entry name" value="V_SNARE"/>
    <property type="match status" value="1"/>
</dbReference>
<reference evidence="6" key="1">
    <citation type="submission" date="2003-11" db="EMBL/GenBank/DDBJ databases">
        <authorList>
            <consortium name="NIH - Xenopus Gene Collection (XGC) project"/>
        </authorList>
    </citation>
    <scope>NUCLEOTIDE SEQUENCE [LARGE SCALE MRNA]</scope>
    <source>
        <tissue>Embryonic tail</tissue>
    </source>
</reference>
<sequence length="215" mass="24709">MVLLTMIARVADGLPLAASMQEDEQSGRDLQQYQNQAKQLFRKLNEQSPTRCTLEAGAMTFHYLIEKGVCYLVLCEAAFPKKLAFAYLEDLFSEFDEQHGKKVPTVSRPYSFIEFDNYIQKTKKSYIDSRARRNLSSVNTELQDVQRIMVANIEEVLLRGEALSALDSKASNLSTLSKKYRQDAKYLNMRSTYAKLAAVAVFSVMLIVYIRFWWL</sequence>
<comment type="function">
    <text evidence="1 2">SNARE involved in targeting and fusion of ER-derived transport vesicles with the Golgi complex as well as Golgi-derived retrograde transport vesicles with the ER.</text>
</comment>
<comment type="subunit">
    <text evidence="1">Component of 2 distinct SNARE complexes.</text>
</comment>
<comment type="subcellular location">
    <subcellularLocation>
        <location evidence="2">Endoplasmic reticulum membrane</location>
        <topology evidence="2">Single-pass type IV membrane protein</topology>
    </subcellularLocation>
    <subcellularLocation>
        <location evidence="2">Endoplasmic reticulum-Golgi intermediate compartment membrane</location>
    </subcellularLocation>
    <subcellularLocation>
        <location evidence="2">Golgi apparatus</location>
        <location evidence="2">cis-Golgi network membrane</location>
    </subcellularLocation>
    <subcellularLocation>
        <location evidence="2">Golgi apparatus</location>
        <location evidence="2">trans-Golgi network membrane</location>
    </subcellularLocation>
    <subcellularLocation>
        <location evidence="1">Melanosome</location>
    </subcellularLocation>
</comment>
<comment type="similarity">
    <text evidence="3">Belongs to the synaptobrevin family.</text>
</comment>
<protein>
    <recommendedName>
        <fullName>Vesicle-trafficking protein SEC22b</fullName>
    </recommendedName>
    <alternativeName>
        <fullName>SEC22 vesicle-trafficking protein homolog B</fullName>
    </alternativeName>
    <alternativeName>
        <fullName>SEC22-like protein 1</fullName>
    </alternativeName>
</protein>
<keyword id="KW-0175">Coiled coil</keyword>
<keyword id="KW-0256">Endoplasmic reticulum</keyword>
<keyword id="KW-0931">ER-Golgi transport</keyword>
<keyword id="KW-0333">Golgi apparatus</keyword>
<keyword id="KW-0472">Membrane</keyword>
<keyword id="KW-0653">Protein transport</keyword>
<keyword id="KW-1185">Reference proteome</keyword>
<keyword id="KW-0812">Transmembrane</keyword>
<keyword id="KW-1133">Transmembrane helix</keyword>
<keyword id="KW-0813">Transport</keyword>
<accession>Q6P7L4</accession>
<organism>
    <name type="scientific">Xenopus tropicalis</name>
    <name type="common">Western clawed frog</name>
    <name type="synonym">Silurana tropicalis</name>
    <dbReference type="NCBI Taxonomy" id="8364"/>
    <lineage>
        <taxon>Eukaryota</taxon>
        <taxon>Metazoa</taxon>
        <taxon>Chordata</taxon>
        <taxon>Craniata</taxon>
        <taxon>Vertebrata</taxon>
        <taxon>Euteleostomi</taxon>
        <taxon>Amphibia</taxon>
        <taxon>Batrachia</taxon>
        <taxon>Anura</taxon>
        <taxon>Pipoidea</taxon>
        <taxon>Pipidae</taxon>
        <taxon>Xenopodinae</taxon>
        <taxon>Xenopus</taxon>
        <taxon>Silurana</taxon>
    </lineage>
</organism>
<evidence type="ECO:0000250" key="1">
    <source>
        <dbReference type="UniProtKB" id="O75396"/>
    </source>
</evidence>
<evidence type="ECO:0000250" key="2">
    <source>
        <dbReference type="UniProtKB" id="Q4KM74"/>
    </source>
</evidence>
<evidence type="ECO:0000255" key="3"/>
<evidence type="ECO:0000255" key="4">
    <source>
        <dbReference type="PROSITE-ProRule" id="PRU00231"/>
    </source>
</evidence>
<evidence type="ECO:0000255" key="5">
    <source>
        <dbReference type="PROSITE-ProRule" id="PRU00290"/>
    </source>
</evidence>
<evidence type="ECO:0000312" key="6">
    <source>
        <dbReference type="EMBL" id="AAH61616.1"/>
    </source>
</evidence>
<proteinExistence type="evidence at transcript level"/>
<feature type="chain" id="PRO_0000252245" description="Vesicle-trafficking protein SEC22b">
    <location>
        <begin position="1"/>
        <end position="215"/>
    </location>
</feature>
<feature type="topological domain" description="Cytoplasmic" evidence="3">
    <location>
        <begin position="1"/>
        <end position="190"/>
    </location>
</feature>
<feature type="transmembrane region" description="Helical" evidence="3">
    <location>
        <begin position="191"/>
        <end position="213"/>
    </location>
</feature>
<feature type="topological domain" description="Lumenal" evidence="3">
    <location>
        <begin position="214"/>
        <end position="215"/>
    </location>
</feature>
<feature type="domain" description="Longin" evidence="4">
    <location>
        <begin position="6"/>
        <end position="119"/>
    </location>
</feature>
<feature type="domain" description="v-SNARE coiled-coil homology" evidence="5">
    <location>
        <begin position="134"/>
        <end position="194"/>
    </location>
</feature>
<name>SC22B_XENTR</name>